<sequence>MRADLAVSYGEERLPRYTSYPTAPHFSPVIDAGTYARWLSELPAGASASLYLHVPFCREMCWYCGCHTQIVRRDDLIAAYQRTLRSEIALVAETIGRRIKVEHIHFGGGTPTIMAPEAFAELMAAMRQAFFVLPSAEIAVEIDPRTLTADMVEAMRLSGVNRASLGVQSFDPIVQRAINRIQSFEQTAAVVDMLRHAGIAGINFDLIYGLPHQTVASCLDTVRRSLLLAPDRFSVFGYAHVPDFKKHQRMINQGALPDGPARHDQACAIANALKEAGYVQIGLDHFARPDDSMAVAFEERTLRRNFQGYTTDQGEVLLGFGASAIGHLPQGYVQNEVQIGAYAQSIGASRLATAKGYGLTDDDRLRADIIERIMCEFSADLGDICARHGAEPEAMLKSASRLKPLISDGVVRLDGDRLAVANDSRFLVRSVAAAFDAHLDPGKQLHSRAV</sequence>
<gene>
    <name type="primary">hemN</name>
    <name type="ordered locus">bll7086</name>
</gene>
<organism>
    <name type="scientific">Bradyrhizobium diazoefficiens (strain JCM 10833 / BCRC 13528 / IAM 13628 / NBRC 14792 / USDA 110)</name>
    <dbReference type="NCBI Taxonomy" id="224911"/>
    <lineage>
        <taxon>Bacteria</taxon>
        <taxon>Pseudomonadati</taxon>
        <taxon>Pseudomonadota</taxon>
        <taxon>Alphaproteobacteria</taxon>
        <taxon>Hyphomicrobiales</taxon>
        <taxon>Nitrobacteraceae</taxon>
        <taxon>Bradyrhizobium</taxon>
    </lineage>
</organism>
<feature type="chain" id="PRO_0000109940" description="Oxygen-independent coproporphyrinogen III oxidase">
    <location>
        <begin position="1"/>
        <end position="450"/>
    </location>
</feature>
<feature type="domain" description="Radical SAM core" evidence="2">
    <location>
        <begin position="42"/>
        <end position="276"/>
    </location>
</feature>
<feature type="binding site" evidence="1">
    <location>
        <position position="51"/>
    </location>
    <ligand>
        <name>S-adenosyl-L-methionine</name>
        <dbReference type="ChEBI" id="CHEBI:59789"/>
        <label>1</label>
    </ligand>
</feature>
<feature type="binding site" evidence="1">
    <location>
        <position position="57"/>
    </location>
    <ligand>
        <name>[4Fe-4S] cluster</name>
        <dbReference type="ChEBI" id="CHEBI:49883"/>
        <note>4Fe-4S-S-AdoMet</note>
    </ligand>
</feature>
<feature type="binding site" evidence="1">
    <location>
        <position position="61"/>
    </location>
    <ligand>
        <name>[4Fe-4S] cluster</name>
        <dbReference type="ChEBI" id="CHEBI:49883"/>
        <note>4Fe-4S-S-AdoMet</note>
    </ligand>
</feature>
<feature type="binding site" evidence="1">
    <location>
        <position position="63"/>
    </location>
    <ligand>
        <name>S-adenosyl-L-methionine</name>
        <dbReference type="ChEBI" id="CHEBI:59789"/>
        <label>2</label>
    </ligand>
</feature>
<feature type="binding site" evidence="1">
    <location>
        <position position="64"/>
    </location>
    <ligand>
        <name>[4Fe-4S] cluster</name>
        <dbReference type="ChEBI" id="CHEBI:49883"/>
        <note>4Fe-4S-S-AdoMet</note>
    </ligand>
</feature>
<feature type="binding site" evidence="1">
    <location>
        <position position="108"/>
    </location>
    <ligand>
        <name>S-adenosyl-L-methionine</name>
        <dbReference type="ChEBI" id="CHEBI:59789"/>
        <label>1</label>
    </ligand>
</feature>
<feature type="binding site" evidence="1">
    <location>
        <begin position="109"/>
        <end position="110"/>
    </location>
    <ligand>
        <name>S-adenosyl-L-methionine</name>
        <dbReference type="ChEBI" id="CHEBI:59789"/>
        <label>2</label>
    </ligand>
</feature>
<feature type="binding site" evidence="1">
    <location>
        <position position="141"/>
    </location>
    <ligand>
        <name>S-adenosyl-L-methionine</name>
        <dbReference type="ChEBI" id="CHEBI:59789"/>
        <label>1</label>
    </ligand>
</feature>
<feature type="binding site" evidence="1">
    <location>
        <position position="168"/>
    </location>
    <ligand>
        <name>S-adenosyl-L-methionine</name>
        <dbReference type="ChEBI" id="CHEBI:59789"/>
        <label>2</label>
    </ligand>
</feature>
<feature type="binding site" evidence="1">
    <location>
        <position position="180"/>
    </location>
    <ligand>
        <name>S-adenosyl-L-methionine</name>
        <dbReference type="ChEBI" id="CHEBI:59789"/>
        <label>2</label>
    </ligand>
</feature>
<feature type="binding site" evidence="1">
    <location>
        <position position="205"/>
    </location>
    <ligand>
        <name>S-adenosyl-L-methionine</name>
        <dbReference type="ChEBI" id="CHEBI:59789"/>
        <label>2</label>
    </ligand>
</feature>
<feature type="binding site" evidence="1">
    <location>
        <position position="239"/>
    </location>
    <ligand>
        <name>S-adenosyl-L-methionine</name>
        <dbReference type="ChEBI" id="CHEBI:59789"/>
        <label>2</label>
    </ligand>
</feature>
<feature type="binding site" evidence="1">
    <location>
        <position position="325"/>
    </location>
    <ligand>
        <name>S-adenosyl-L-methionine</name>
        <dbReference type="ChEBI" id="CHEBI:59789"/>
        <label>1</label>
    </ligand>
</feature>
<feature type="sequence conflict" description="In Ref. 1; CAA05507." evidence="3" ref="1">
    <original>Q</original>
    <variation>H</variation>
    <location>
        <position position="307"/>
    </location>
</feature>
<name>HEMN_BRADU</name>
<comment type="function">
    <text evidence="1">Involved in the heme biosynthesis. Catalyzes the anaerobic oxidative decarboxylation of propionate groups of rings A and B of coproporphyrinogen III to yield the vinyl groups in protoporphyrinogen IX.</text>
</comment>
<comment type="catalytic activity">
    <reaction evidence="1">
        <text>coproporphyrinogen III + 2 S-adenosyl-L-methionine = protoporphyrinogen IX + 2 5'-deoxyadenosine + 2 L-methionine + 2 CO2</text>
        <dbReference type="Rhea" id="RHEA:15425"/>
        <dbReference type="ChEBI" id="CHEBI:16526"/>
        <dbReference type="ChEBI" id="CHEBI:17319"/>
        <dbReference type="ChEBI" id="CHEBI:57307"/>
        <dbReference type="ChEBI" id="CHEBI:57309"/>
        <dbReference type="ChEBI" id="CHEBI:57844"/>
        <dbReference type="ChEBI" id="CHEBI:59789"/>
        <dbReference type="EC" id="1.3.98.3"/>
    </reaction>
</comment>
<comment type="cofactor">
    <cofactor evidence="1">
        <name>[4Fe-4S] cluster</name>
        <dbReference type="ChEBI" id="CHEBI:49883"/>
    </cofactor>
    <text evidence="1">Binds 1 [4Fe-4S] cluster. The cluster is coordinated with 3 cysteines and an exchangeable S-adenosyl-L-methionine.</text>
</comment>
<comment type="pathway">
    <text>Porphyrin-containing compound metabolism; protoporphyrin-IX biosynthesis; protoporphyrinogen-IX from coproporphyrinogen-III (AdoMet route): step 1/1.</text>
</comment>
<comment type="subunit">
    <text evidence="1">Monomer.</text>
</comment>
<comment type="subcellular location">
    <subcellularLocation>
        <location evidence="1">Cytoplasm</location>
    </subcellularLocation>
</comment>
<comment type="similarity">
    <text evidence="3">Belongs to the anaerobic coproporphyrinogen-III oxidase family.</text>
</comment>
<keyword id="KW-0004">4Fe-4S</keyword>
<keyword id="KW-0963">Cytoplasm</keyword>
<keyword id="KW-0408">Iron</keyword>
<keyword id="KW-0411">Iron-sulfur</keyword>
<keyword id="KW-0479">Metal-binding</keyword>
<keyword id="KW-0560">Oxidoreductase</keyword>
<keyword id="KW-0627">Porphyrin biosynthesis</keyword>
<keyword id="KW-1185">Reference proteome</keyword>
<keyword id="KW-0949">S-adenosyl-L-methionine</keyword>
<accession>O31381</accession>
<reference key="1">
    <citation type="journal article" date="2001" name="J. Bacteriol.">
        <title>One of two hemN genes in Bradyrhizobium japonicum is functional during anaerobic growth and in symbiosis.</title>
        <authorList>
            <person name="Fischer H.-M."/>
            <person name="Velasco L."/>
            <person name="Delgado M.J."/>
            <person name="Bedmar E.J."/>
            <person name="Schaeren S."/>
            <person name="Zingg D."/>
            <person name="Goettfert M."/>
            <person name="Hennecke H."/>
        </authorList>
    </citation>
    <scope>NUCLEOTIDE SEQUENCE [GENOMIC DNA]</scope>
    <source>
        <strain>JCM 10833 / BCRC 13528 / IAM 13628 / NBRC 14792 / USDA 110</strain>
    </source>
</reference>
<reference key="2">
    <citation type="journal article" date="2002" name="DNA Res.">
        <title>Complete genomic sequence of nitrogen-fixing symbiotic bacterium Bradyrhizobium japonicum USDA110.</title>
        <authorList>
            <person name="Kaneko T."/>
            <person name="Nakamura Y."/>
            <person name="Sato S."/>
            <person name="Minamisawa K."/>
            <person name="Uchiumi T."/>
            <person name="Sasamoto S."/>
            <person name="Watanabe A."/>
            <person name="Idesawa K."/>
            <person name="Iriguchi M."/>
            <person name="Kawashima K."/>
            <person name="Kohara M."/>
            <person name="Matsumoto M."/>
            <person name="Shimpo S."/>
            <person name="Tsuruoka H."/>
            <person name="Wada T."/>
            <person name="Yamada M."/>
            <person name="Tabata S."/>
        </authorList>
    </citation>
    <scope>NUCLEOTIDE SEQUENCE [LARGE SCALE GENOMIC DNA]</scope>
    <source>
        <strain>JCM 10833 / BCRC 13528 / IAM 13628 / NBRC 14792 / USDA 110</strain>
    </source>
</reference>
<evidence type="ECO:0000250" key="1">
    <source>
        <dbReference type="UniProtKB" id="P32131"/>
    </source>
</evidence>
<evidence type="ECO:0000255" key="2">
    <source>
        <dbReference type="PROSITE-ProRule" id="PRU01266"/>
    </source>
</evidence>
<evidence type="ECO:0000305" key="3"/>
<proteinExistence type="inferred from homology"/>
<protein>
    <recommendedName>
        <fullName>Oxygen-independent coproporphyrinogen III oxidase</fullName>
        <shortName>CPO</shortName>
        <ecNumber evidence="1">1.3.98.3</ecNumber>
    </recommendedName>
    <alternativeName>
        <fullName>Coproporphyrinogen III dehydrogenase</fullName>
        <shortName>CPDH</shortName>
    </alternativeName>
</protein>
<dbReference type="EC" id="1.3.98.3" evidence="1"/>
<dbReference type="EMBL" id="AJ002517">
    <property type="protein sequence ID" value="CAA05507.1"/>
    <property type="molecule type" value="Genomic_DNA"/>
</dbReference>
<dbReference type="EMBL" id="BA000040">
    <property type="protein sequence ID" value="BAC52351.1"/>
    <property type="molecule type" value="Genomic_DNA"/>
</dbReference>
<dbReference type="RefSeq" id="NP_773726.1">
    <property type="nucleotide sequence ID" value="NC_004463.1"/>
</dbReference>
<dbReference type="RefSeq" id="WP_011089823.1">
    <property type="nucleotide sequence ID" value="NC_004463.1"/>
</dbReference>
<dbReference type="SMR" id="O31381"/>
<dbReference type="FunCoup" id="O31381">
    <property type="interactions" value="285"/>
</dbReference>
<dbReference type="STRING" id="224911.AAV28_33075"/>
<dbReference type="EnsemblBacteria" id="BAC52351">
    <property type="protein sequence ID" value="BAC52351"/>
    <property type="gene ID" value="BAC52351"/>
</dbReference>
<dbReference type="GeneID" id="46494051"/>
<dbReference type="KEGG" id="bja:bll7086"/>
<dbReference type="PATRIC" id="fig|224911.44.peg.7144"/>
<dbReference type="eggNOG" id="COG0635">
    <property type="taxonomic scope" value="Bacteria"/>
</dbReference>
<dbReference type="HOGENOM" id="CLU_027579_3_0_5"/>
<dbReference type="InParanoid" id="O31381"/>
<dbReference type="OrthoDB" id="9808022at2"/>
<dbReference type="PhylomeDB" id="O31381"/>
<dbReference type="UniPathway" id="UPA00251">
    <property type="reaction ID" value="UER00323"/>
</dbReference>
<dbReference type="Proteomes" id="UP000002526">
    <property type="component" value="Chromosome"/>
</dbReference>
<dbReference type="GO" id="GO:0005737">
    <property type="term" value="C:cytoplasm"/>
    <property type="evidence" value="ECO:0000250"/>
    <property type="project" value="UniProtKB"/>
</dbReference>
<dbReference type="GO" id="GO:0051539">
    <property type="term" value="F:4 iron, 4 sulfur cluster binding"/>
    <property type="evidence" value="ECO:0000250"/>
    <property type="project" value="UniProtKB"/>
</dbReference>
<dbReference type="GO" id="GO:0051989">
    <property type="term" value="F:coproporphyrinogen dehydrogenase activity"/>
    <property type="evidence" value="ECO:0000250"/>
    <property type="project" value="UniProtKB"/>
</dbReference>
<dbReference type="GO" id="GO:0004109">
    <property type="term" value="F:coproporphyrinogen oxidase activity"/>
    <property type="evidence" value="ECO:0007669"/>
    <property type="project" value="InterPro"/>
</dbReference>
<dbReference type="GO" id="GO:0046872">
    <property type="term" value="F:metal ion binding"/>
    <property type="evidence" value="ECO:0007669"/>
    <property type="project" value="UniProtKB-KW"/>
</dbReference>
<dbReference type="GO" id="GO:0006779">
    <property type="term" value="P:porphyrin-containing compound biosynthetic process"/>
    <property type="evidence" value="ECO:0000250"/>
    <property type="project" value="UniProtKB"/>
</dbReference>
<dbReference type="GO" id="GO:0006782">
    <property type="term" value="P:protoporphyrinogen IX biosynthetic process"/>
    <property type="evidence" value="ECO:0000250"/>
    <property type="project" value="UniProtKB"/>
</dbReference>
<dbReference type="CDD" id="cd01335">
    <property type="entry name" value="Radical_SAM"/>
    <property type="match status" value="1"/>
</dbReference>
<dbReference type="Gene3D" id="1.10.10.920">
    <property type="match status" value="1"/>
</dbReference>
<dbReference type="Gene3D" id="3.80.30.20">
    <property type="entry name" value="tm_1862 like domain"/>
    <property type="match status" value="1"/>
</dbReference>
<dbReference type="InterPro" id="IPR004558">
    <property type="entry name" value="Coprogen_oxidase_HemN"/>
</dbReference>
<dbReference type="InterPro" id="IPR034505">
    <property type="entry name" value="Coproporphyrinogen-III_oxidase"/>
</dbReference>
<dbReference type="InterPro" id="IPR006638">
    <property type="entry name" value="Elp3/MiaA/NifB-like_rSAM"/>
</dbReference>
<dbReference type="InterPro" id="IPR007197">
    <property type="entry name" value="rSAM"/>
</dbReference>
<dbReference type="InterPro" id="IPR023404">
    <property type="entry name" value="rSAM_horseshoe"/>
</dbReference>
<dbReference type="NCBIfam" id="TIGR00538">
    <property type="entry name" value="hemN"/>
    <property type="match status" value="1"/>
</dbReference>
<dbReference type="PANTHER" id="PTHR13932">
    <property type="entry name" value="COPROPORPHYRINIGEN III OXIDASE"/>
    <property type="match status" value="1"/>
</dbReference>
<dbReference type="PANTHER" id="PTHR13932:SF6">
    <property type="entry name" value="OXYGEN-INDEPENDENT COPROPORPHYRINOGEN III OXIDASE"/>
    <property type="match status" value="1"/>
</dbReference>
<dbReference type="Pfam" id="PF04055">
    <property type="entry name" value="Radical_SAM"/>
    <property type="match status" value="1"/>
</dbReference>
<dbReference type="PIRSF" id="PIRSF000167">
    <property type="entry name" value="HemN"/>
    <property type="match status" value="1"/>
</dbReference>
<dbReference type="SFLD" id="SFLDG01065">
    <property type="entry name" value="anaerobic_coproporphyrinogen-I"/>
    <property type="match status" value="1"/>
</dbReference>
<dbReference type="SFLD" id="SFLDS00029">
    <property type="entry name" value="Radical_SAM"/>
    <property type="match status" value="1"/>
</dbReference>
<dbReference type="SMART" id="SM00729">
    <property type="entry name" value="Elp3"/>
    <property type="match status" value="1"/>
</dbReference>
<dbReference type="SUPFAM" id="SSF102114">
    <property type="entry name" value="Radical SAM enzymes"/>
    <property type="match status" value="1"/>
</dbReference>
<dbReference type="PROSITE" id="PS51918">
    <property type="entry name" value="RADICAL_SAM"/>
    <property type="match status" value="1"/>
</dbReference>